<keyword id="KW-0002">3D-structure</keyword>
<keyword id="KW-0539">Nucleus</keyword>
<keyword id="KW-0647">Proteasome</keyword>
<keyword id="KW-1185">Reference proteome</keyword>
<keyword id="KW-0833">Ubl conjugation pathway</keyword>
<reference key="1">
    <citation type="journal article" date="2000" name="J. Biol. Chem.">
        <title>Analysis of a gene encoding Rpn10 of the fission yeast proteasome reveals that the polyubiquitin-binding site of this subunit is essential when Rpn12/Mts3 activity is compromised.</title>
        <authorList>
            <person name="Wilkinson C.R.M."/>
            <person name="Ferrell K."/>
            <person name="Penney M."/>
            <person name="Wallace M."/>
            <person name="Dubiel W."/>
            <person name="Gordon C."/>
        </authorList>
    </citation>
    <scope>NUCLEOTIDE SEQUENCE [GENOMIC DNA]</scope>
    <scope>FUNCTION</scope>
    <scope>SUBCELLULAR LOCATION</scope>
</reference>
<reference key="2">
    <citation type="journal article" date="2002" name="Nature">
        <title>The genome sequence of Schizosaccharomyces pombe.</title>
        <authorList>
            <person name="Wood V."/>
            <person name="Gwilliam R."/>
            <person name="Rajandream M.A."/>
            <person name="Lyne M.H."/>
            <person name="Lyne R."/>
            <person name="Stewart A."/>
            <person name="Sgouros J.G."/>
            <person name="Peat N."/>
            <person name="Hayles J."/>
            <person name="Baker S.G."/>
            <person name="Basham D."/>
            <person name="Bowman S."/>
            <person name="Brooks K."/>
            <person name="Brown D."/>
            <person name="Brown S."/>
            <person name="Chillingworth T."/>
            <person name="Churcher C.M."/>
            <person name="Collins M."/>
            <person name="Connor R."/>
            <person name="Cronin A."/>
            <person name="Davis P."/>
            <person name="Feltwell T."/>
            <person name="Fraser A."/>
            <person name="Gentles S."/>
            <person name="Goble A."/>
            <person name="Hamlin N."/>
            <person name="Harris D.E."/>
            <person name="Hidalgo J."/>
            <person name="Hodgson G."/>
            <person name="Holroyd S."/>
            <person name="Hornsby T."/>
            <person name="Howarth S."/>
            <person name="Huckle E.J."/>
            <person name="Hunt S."/>
            <person name="Jagels K."/>
            <person name="James K.D."/>
            <person name="Jones L."/>
            <person name="Jones M."/>
            <person name="Leather S."/>
            <person name="McDonald S."/>
            <person name="McLean J."/>
            <person name="Mooney P."/>
            <person name="Moule S."/>
            <person name="Mungall K.L."/>
            <person name="Murphy L.D."/>
            <person name="Niblett D."/>
            <person name="Odell C."/>
            <person name="Oliver K."/>
            <person name="O'Neil S."/>
            <person name="Pearson D."/>
            <person name="Quail M.A."/>
            <person name="Rabbinowitsch E."/>
            <person name="Rutherford K.M."/>
            <person name="Rutter S."/>
            <person name="Saunders D."/>
            <person name="Seeger K."/>
            <person name="Sharp S."/>
            <person name="Skelton J."/>
            <person name="Simmonds M.N."/>
            <person name="Squares R."/>
            <person name="Squares S."/>
            <person name="Stevens K."/>
            <person name="Taylor K."/>
            <person name="Taylor R.G."/>
            <person name="Tivey A."/>
            <person name="Walsh S.V."/>
            <person name="Warren T."/>
            <person name="Whitehead S."/>
            <person name="Woodward J.R."/>
            <person name="Volckaert G."/>
            <person name="Aert R."/>
            <person name="Robben J."/>
            <person name="Grymonprez B."/>
            <person name="Weltjens I."/>
            <person name="Vanstreels E."/>
            <person name="Rieger M."/>
            <person name="Schaefer M."/>
            <person name="Mueller-Auer S."/>
            <person name="Gabel C."/>
            <person name="Fuchs M."/>
            <person name="Duesterhoeft A."/>
            <person name="Fritzc C."/>
            <person name="Holzer E."/>
            <person name="Moestl D."/>
            <person name="Hilbert H."/>
            <person name="Borzym K."/>
            <person name="Langer I."/>
            <person name="Beck A."/>
            <person name="Lehrach H."/>
            <person name="Reinhardt R."/>
            <person name="Pohl T.M."/>
            <person name="Eger P."/>
            <person name="Zimmermann W."/>
            <person name="Wedler H."/>
            <person name="Wambutt R."/>
            <person name="Purnelle B."/>
            <person name="Goffeau A."/>
            <person name="Cadieu E."/>
            <person name="Dreano S."/>
            <person name="Gloux S."/>
            <person name="Lelaure V."/>
            <person name="Mottier S."/>
            <person name="Galibert F."/>
            <person name="Aves S.J."/>
            <person name="Xiang Z."/>
            <person name="Hunt C."/>
            <person name="Moore K."/>
            <person name="Hurst S.M."/>
            <person name="Lucas M."/>
            <person name="Rochet M."/>
            <person name="Gaillardin C."/>
            <person name="Tallada V.A."/>
            <person name="Garzon A."/>
            <person name="Thode G."/>
            <person name="Daga R.R."/>
            <person name="Cruzado L."/>
            <person name="Jimenez J."/>
            <person name="Sanchez M."/>
            <person name="del Rey F."/>
            <person name="Benito J."/>
            <person name="Dominguez A."/>
            <person name="Revuelta J.L."/>
            <person name="Moreno S."/>
            <person name="Armstrong J."/>
            <person name="Forsburg S.L."/>
            <person name="Cerutti L."/>
            <person name="Lowe T."/>
            <person name="McCombie W.R."/>
            <person name="Paulsen I."/>
            <person name="Potashkin J."/>
            <person name="Shpakovski G.V."/>
            <person name="Ussery D."/>
            <person name="Barrell B.G."/>
            <person name="Nurse P."/>
        </authorList>
    </citation>
    <scope>NUCLEOTIDE SEQUENCE [LARGE SCALE GENOMIC DNA]</scope>
    <source>
        <strain>972 / ATCC 24843</strain>
    </source>
</reference>
<reference key="3">
    <citation type="journal article" date="2003" name="FEBS Lett.">
        <title>Ubiquitin binding proteins protect ubiquitin conjugates from disassembly.</title>
        <authorList>
            <person name="Hartmann-Petersen R."/>
            <person name="Hendil K.B."/>
            <person name="Gordon C."/>
        </authorList>
    </citation>
    <scope>FUNCTION</scope>
</reference>
<reference key="4">
    <citation type="journal article" date="2004" name="J. Mol. Biol.">
        <title>Uch2/Uch37 is the major deubiquitinating enzyme associated with the 26S proteasome in fission yeast.</title>
        <authorList>
            <person name="Stone M."/>
            <person name="Hartmann-Petersen R."/>
            <person name="Seeger M."/>
            <person name="Bech-Otschir D."/>
            <person name="Wallace M."/>
            <person name="Gordon C."/>
        </authorList>
    </citation>
    <scope>INTERACTION WITH UCH2</scope>
</reference>
<proteinExistence type="evidence at protein level"/>
<gene>
    <name type="primary">rpn10</name>
    <name type="synonym">pus1</name>
    <name type="ORF">SPAC637.10c</name>
</gene>
<sequence>MVLEATMILIDNSEWMINGDYIPTRFEAQKDTVHMIFNQKINDNPENMCGLMTIGDNSPQVLSTLTRDYGKFLSAMHDLPVRGNAKFGDGIQIAQLALKHRENKIQRQRIVAFVGSPIVEDEKNLIRLAKRMKKNNVAIDIIHIGELQNESALQHFIDAANSSDSCHLVSIPPSPQLLSDLVNQSPIGQGVVASQNQFEYGVDPNLDVELALALELSMAEERARQEVAAQKSSEETEDKKMQE</sequence>
<organism>
    <name type="scientific">Schizosaccharomyces pombe (strain 972 / ATCC 24843)</name>
    <name type="common">Fission yeast</name>
    <dbReference type="NCBI Taxonomy" id="284812"/>
    <lineage>
        <taxon>Eukaryota</taxon>
        <taxon>Fungi</taxon>
        <taxon>Dikarya</taxon>
        <taxon>Ascomycota</taxon>
        <taxon>Taphrinomycotina</taxon>
        <taxon>Schizosaccharomycetes</taxon>
        <taxon>Schizosaccharomycetales</taxon>
        <taxon>Schizosaccharomycetaceae</taxon>
        <taxon>Schizosaccharomyces</taxon>
    </lineage>
</organism>
<comment type="function">
    <text evidence="5 6">Protects ubiquitin chains against dissambly by deubiquitinating enzymes thereby promoting protein degradation.</text>
</comment>
<comment type="subunit">
    <text evidence="1 7">The 26S proteasome is composed of a core protease, known as the 20S proteasome, capped at one or both ends by the 19S regulatory complex (RC). The RC is composed of at least 18 different subunits in two subcomplexes, the base and the lid, which form the portions proximal and distal to the 20S proteolytic core, respectively (By similarity). Interacts with uch2.</text>
</comment>
<comment type="subcellular location">
    <subcellularLocation>
        <location evidence="5">Nucleus</location>
    </subcellularLocation>
</comment>
<comment type="similarity">
    <text evidence="8">Belongs to the proteasome subunit S5A family.</text>
</comment>
<evidence type="ECO:0000250" key="1"/>
<evidence type="ECO:0000255" key="2">
    <source>
        <dbReference type="PROSITE-ProRule" id="PRU00213"/>
    </source>
</evidence>
<evidence type="ECO:0000255" key="3">
    <source>
        <dbReference type="PROSITE-ProRule" id="PRU00219"/>
    </source>
</evidence>
<evidence type="ECO:0000256" key="4">
    <source>
        <dbReference type="SAM" id="MobiDB-lite"/>
    </source>
</evidence>
<evidence type="ECO:0000269" key="5">
    <source>
    </source>
</evidence>
<evidence type="ECO:0000269" key="6">
    <source>
    </source>
</evidence>
<evidence type="ECO:0000269" key="7">
    <source>
    </source>
</evidence>
<evidence type="ECO:0000305" key="8"/>
<evidence type="ECO:0007829" key="9">
    <source>
        <dbReference type="PDB" id="2X5N"/>
    </source>
</evidence>
<dbReference type="EMBL" id="CU329670">
    <property type="protein sequence ID" value="CAA22589.1"/>
    <property type="molecule type" value="Genomic_DNA"/>
</dbReference>
<dbReference type="PIR" id="T39002">
    <property type="entry name" value="T39002"/>
</dbReference>
<dbReference type="RefSeq" id="NP_594628.1">
    <property type="nucleotide sequence ID" value="NM_001020056.2"/>
</dbReference>
<dbReference type="PDB" id="2X5N">
    <property type="method" value="X-ray"/>
    <property type="resolution" value="1.30 A"/>
    <property type="chains" value="A=2-193"/>
</dbReference>
<dbReference type="PDBsum" id="2X5N"/>
<dbReference type="SMR" id="O94444"/>
<dbReference type="BioGRID" id="280096">
    <property type="interactions" value="27"/>
</dbReference>
<dbReference type="ComplexPortal" id="CPX-9077">
    <property type="entry name" value="26S proteasome complex"/>
</dbReference>
<dbReference type="FunCoup" id="O94444">
    <property type="interactions" value="596"/>
</dbReference>
<dbReference type="IntAct" id="O94444">
    <property type="interactions" value="1"/>
</dbReference>
<dbReference type="STRING" id="284812.O94444"/>
<dbReference type="iPTMnet" id="O94444"/>
<dbReference type="PaxDb" id="4896-SPAC637.10c.1"/>
<dbReference type="EnsemblFungi" id="SPAC637.10c.1">
    <property type="protein sequence ID" value="SPAC637.10c.1:pep"/>
    <property type="gene ID" value="SPAC637.10c"/>
</dbReference>
<dbReference type="GeneID" id="2543682"/>
<dbReference type="KEGG" id="spo:2543682"/>
<dbReference type="PomBase" id="SPAC637.10c">
    <property type="gene designation" value="rpn10"/>
</dbReference>
<dbReference type="VEuPathDB" id="FungiDB:SPAC637.10c"/>
<dbReference type="eggNOG" id="KOG2884">
    <property type="taxonomic scope" value="Eukaryota"/>
</dbReference>
<dbReference type="HOGENOM" id="CLU_033293_1_0_1"/>
<dbReference type="InParanoid" id="O94444"/>
<dbReference type="OMA" id="QMSMQDQ"/>
<dbReference type="PhylomeDB" id="O94444"/>
<dbReference type="EvolutionaryTrace" id="O94444"/>
<dbReference type="PRO" id="PR:O94444"/>
<dbReference type="Proteomes" id="UP000002485">
    <property type="component" value="Chromosome I"/>
</dbReference>
<dbReference type="GO" id="GO:0005829">
    <property type="term" value="C:cytosol"/>
    <property type="evidence" value="ECO:0007005"/>
    <property type="project" value="PomBase"/>
</dbReference>
<dbReference type="GO" id="GO:0005634">
    <property type="term" value="C:nucleus"/>
    <property type="evidence" value="ECO:0007005"/>
    <property type="project" value="PomBase"/>
</dbReference>
<dbReference type="GO" id="GO:0008540">
    <property type="term" value="C:proteasome regulatory particle, base subcomplex"/>
    <property type="evidence" value="ECO:0000315"/>
    <property type="project" value="PomBase"/>
</dbReference>
<dbReference type="GO" id="GO:0008541">
    <property type="term" value="C:proteasome regulatory particle, lid subcomplex"/>
    <property type="evidence" value="ECO:0000314"/>
    <property type="project" value="PomBase"/>
</dbReference>
<dbReference type="GO" id="GO:0036435">
    <property type="term" value="F:K48-linked polyubiquitin modification-dependent protein binding"/>
    <property type="evidence" value="ECO:0000314"/>
    <property type="project" value="PomBase"/>
</dbReference>
<dbReference type="GO" id="GO:1990426">
    <property type="term" value="P:mitotic recombination-dependent replication fork processing"/>
    <property type="evidence" value="ECO:0000315"/>
    <property type="project" value="PomBase"/>
</dbReference>
<dbReference type="GO" id="GO:0043161">
    <property type="term" value="P:proteasome-mediated ubiquitin-dependent protein catabolic process"/>
    <property type="evidence" value="ECO:0000305"/>
    <property type="project" value="PomBase"/>
</dbReference>
<dbReference type="GO" id="GO:0120290">
    <property type="term" value="P:stalled replication fork localization to nuclear periphery"/>
    <property type="evidence" value="ECO:0000315"/>
    <property type="project" value="PomBase"/>
</dbReference>
<dbReference type="CDD" id="cd01452">
    <property type="entry name" value="VWA_26S_proteasome_subunit"/>
    <property type="match status" value="1"/>
</dbReference>
<dbReference type="DisProt" id="DP02129"/>
<dbReference type="FunFam" id="3.40.50.410:FF:000005">
    <property type="entry name" value="26S proteasome non-ATPase regulatory subunit 4"/>
    <property type="match status" value="1"/>
</dbReference>
<dbReference type="Gene3D" id="1.10.287.3990">
    <property type="match status" value="1"/>
</dbReference>
<dbReference type="Gene3D" id="3.40.50.410">
    <property type="entry name" value="von Willebrand factor, type A domain"/>
    <property type="match status" value="1"/>
</dbReference>
<dbReference type="InterPro" id="IPR027040">
    <property type="entry name" value="PSMD4"/>
</dbReference>
<dbReference type="InterPro" id="IPR003903">
    <property type="entry name" value="UIM_dom"/>
</dbReference>
<dbReference type="InterPro" id="IPR002035">
    <property type="entry name" value="VWF_A"/>
</dbReference>
<dbReference type="InterPro" id="IPR036465">
    <property type="entry name" value="vWFA_dom_sf"/>
</dbReference>
<dbReference type="PANTHER" id="PTHR10223">
    <property type="entry name" value="26S PROTEASOME NON-ATPASE REGULATORY SUBUNIT 4"/>
    <property type="match status" value="1"/>
</dbReference>
<dbReference type="PANTHER" id="PTHR10223:SF0">
    <property type="entry name" value="26S PROTEASOME NON-ATPASE REGULATORY SUBUNIT 4"/>
    <property type="match status" value="1"/>
</dbReference>
<dbReference type="Pfam" id="PF13519">
    <property type="entry name" value="VWA_2"/>
    <property type="match status" value="1"/>
</dbReference>
<dbReference type="SMART" id="SM00327">
    <property type="entry name" value="VWA"/>
    <property type="match status" value="1"/>
</dbReference>
<dbReference type="SUPFAM" id="SSF53300">
    <property type="entry name" value="vWA-like"/>
    <property type="match status" value="1"/>
</dbReference>
<dbReference type="PROSITE" id="PS50330">
    <property type="entry name" value="UIM"/>
    <property type="match status" value="1"/>
</dbReference>
<dbReference type="PROSITE" id="PS50234">
    <property type="entry name" value="VWFA"/>
    <property type="match status" value="1"/>
</dbReference>
<name>RPN10_SCHPO</name>
<feature type="chain" id="PRO_0000173833" description="26S proteasome regulatory subunit rpn10">
    <location>
        <begin position="1"/>
        <end position="243"/>
    </location>
</feature>
<feature type="domain" description="VWFA" evidence="3">
    <location>
        <begin position="5"/>
        <end position="185"/>
    </location>
</feature>
<feature type="domain" description="UIM" evidence="2">
    <location>
        <begin position="205"/>
        <end position="224"/>
    </location>
</feature>
<feature type="region of interest" description="Disordered" evidence="4">
    <location>
        <begin position="223"/>
        <end position="243"/>
    </location>
</feature>
<feature type="compositionally biased region" description="Basic and acidic residues" evidence="4">
    <location>
        <begin position="232"/>
        <end position="243"/>
    </location>
</feature>
<feature type="strand" evidence="9">
    <location>
        <begin position="4"/>
        <end position="10"/>
    </location>
</feature>
<feature type="helix" evidence="9">
    <location>
        <begin position="14"/>
        <end position="17"/>
    </location>
</feature>
<feature type="strand" evidence="9">
    <location>
        <begin position="21"/>
        <end position="23"/>
    </location>
</feature>
<feature type="helix" evidence="9">
    <location>
        <begin position="25"/>
        <end position="43"/>
    </location>
</feature>
<feature type="strand" evidence="9">
    <location>
        <begin position="48"/>
        <end position="53"/>
    </location>
</feature>
<feature type="strand" evidence="9">
    <location>
        <begin position="61"/>
        <end position="67"/>
    </location>
</feature>
<feature type="helix" evidence="9">
    <location>
        <begin position="69"/>
        <end position="76"/>
    </location>
</feature>
<feature type="helix" evidence="9">
    <location>
        <begin position="87"/>
        <end position="99"/>
    </location>
</feature>
<feature type="strand" evidence="9">
    <location>
        <begin position="106"/>
        <end position="114"/>
    </location>
</feature>
<feature type="helix" evidence="9">
    <location>
        <begin position="122"/>
        <end position="134"/>
    </location>
</feature>
<feature type="strand" evidence="9">
    <location>
        <begin position="137"/>
        <end position="145"/>
    </location>
</feature>
<feature type="helix" evidence="9">
    <location>
        <begin position="152"/>
        <end position="160"/>
    </location>
</feature>
<feature type="strand" evidence="9">
    <location>
        <begin position="167"/>
        <end position="171"/>
    </location>
</feature>
<feature type="helix" evidence="9">
    <location>
        <begin position="178"/>
        <end position="183"/>
    </location>
</feature>
<protein>
    <recommendedName>
        <fullName>26S proteasome regulatory subunit rpn10</fullName>
    </recommendedName>
</protein>
<accession>O94444</accession>